<sequence>MSLIRLNIDSFRNIQLAQLSPSSGINLIYGQNGSGKTSILEAIYFLGMGRSFRSHLSQRVINNEQDKLTLFATLNLPRGDSKIGLRRFRSGETEVKIDGEKVKRLSTLAETLPIQVITPESFSLLFEGPKSRRQFIDWGAFHSDPQFYAAWVNVRRVLKQRNQLLRNNSSYEQIQYWDREFVRYTEQVTEIRNRYVDSLNELLKGIIGEFLPQVDVKVSFTRGWDSKTDFAQLLESQYPRDLATGHTVSGPHKADLRLRVGSLPAQDALSRGQLKLLVCALRIAQGKLLKQQIDKHSIYLVDDLPSELDAQHRQLLLKQLVDTGAQVFVTAIEPAAIVDSLHTPPSRMFHVEQGRVTVIE</sequence>
<keyword id="KW-0067">ATP-binding</keyword>
<keyword id="KW-0963">Cytoplasm</keyword>
<keyword id="KW-0227">DNA damage</keyword>
<keyword id="KW-0234">DNA repair</keyword>
<keyword id="KW-0235">DNA replication</keyword>
<keyword id="KW-0238">DNA-binding</keyword>
<keyword id="KW-0547">Nucleotide-binding</keyword>
<keyword id="KW-0742">SOS response</keyword>
<gene>
    <name evidence="1" type="primary">recF</name>
    <name type="ordered locus">Shewmr7_0003</name>
</gene>
<dbReference type="EMBL" id="CP000444">
    <property type="protein sequence ID" value="ABI41009.1"/>
    <property type="molecule type" value="Genomic_DNA"/>
</dbReference>
<dbReference type="SMR" id="Q0I0U6"/>
<dbReference type="KEGG" id="shm:Shewmr7_0003"/>
<dbReference type="HOGENOM" id="CLU_040267_0_0_6"/>
<dbReference type="GO" id="GO:0005737">
    <property type="term" value="C:cytoplasm"/>
    <property type="evidence" value="ECO:0007669"/>
    <property type="project" value="UniProtKB-SubCell"/>
</dbReference>
<dbReference type="GO" id="GO:0005524">
    <property type="term" value="F:ATP binding"/>
    <property type="evidence" value="ECO:0007669"/>
    <property type="project" value="UniProtKB-UniRule"/>
</dbReference>
<dbReference type="GO" id="GO:0003697">
    <property type="term" value="F:single-stranded DNA binding"/>
    <property type="evidence" value="ECO:0007669"/>
    <property type="project" value="UniProtKB-UniRule"/>
</dbReference>
<dbReference type="GO" id="GO:0006260">
    <property type="term" value="P:DNA replication"/>
    <property type="evidence" value="ECO:0007669"/>
    <property type="project" value="UniProtKB-UniRule"/>
</dbReference>
<dbReference type="GO" id="GO:0000731">
    <property type="term" value="P:DNA synthesis involved in DNA repair"/>
    <property type="evidence" value="ECO:0007669"/>
    <property type="project" value="TreeGrafter"/>
</dbReference>
<dbReference type="GO" id="GO:0006302">
    <property type="term" value="P:double-strand break repair"/>
    <property type="evidence" value="ECO:0007669"/>
    <property type="project" value="TreeGrafter"/>
</dbReference>
<dbReference type="GO" id="GO:0009432">
    <property type="term" value="P:SOS response"/>
    <property type="evidence" value="ECO:0007669"/>
    <property type="project" value="UniProtKB-UniRule"/>
</dbReference>
<dbReference type="Gene3D" id="3.40.50.300">
    <property type="entry name" value="P-loop containing nucleotide triphosphate hydrolases"/>
    <property type="match status" value="1"/>
</dbReference>
<dbReference type="Gene3D" id="1.20.1050.90">
    <property type="entry name" value="RecF/RecN/SMC, N-terminal domain"/>
    <property type="match status" value="1"/>
</dbReference>
<dbReference type="HAMAP" id="MF_00365">
    <property type="entry name" value="RecF"/>
    <property type="match status" value="1"/>
</dbReference>
<dbReference type="InterPro" id="IPR001238">
    <property type="entry name" value="DNA-binding_RecF"/>
</dbReference>
<dbReference type="InterPro" id="IPR018078">
    <property type="entry name" value="DNA-binding_RecF_CS"/>
</dbReference>
<dbReference type="InterPro" id="IPR027417">
    <property type="entry name" value="P-loop_NTPase"/>
</dbReference>
<dbReference type="InterPro" id="IPR003395">
    <property type="entry name" value="RecF/RecN/SMC_N"/>
</dbReference>
<dbReference type="InterPro" id="IPR042174">
    <property type="entry name" value="RecF_2"/>
</dbReference>
<dbReference type="NCBIfam" id="TIGR00611">
    <property type="entry name" value="recf"/>
    <property type="match status" value="1"/>
</dbReference>
<dbReference type="PANTHER" id="PTHR32182">
    <property type="entry name" value="DNA REPLICATION AND REPAIR PROTEIN RECF"/>
    <property type="match status" value="1"/>
</dbReference>
<dbReference type="PANTHER" id="PTHR32182:SF0">
    <property type="entry name" value="DNA REPLICATION AND REPAIR PROTEIN RECF"/>
    <property type="match status" value="1"/>
</dbReference>
<dbReference type="Pfam" id="PF02463">
    <property type="entry name" value="SMC_N"/>
    <property type="match status" value="1"/>
</dbReference>
<dbReference type="SUPFAM" id="SSF52540">
    <property type="entry name" value="P-loop containing nucleoside triphosphate hydrolases"/>
    <property type="match status" value="1"/>
</dbReference>
<dbReference type="PROSITE" id="PS00617">
    <property type="entry name" value="RECF_1"/>
    <property type="match status" value="1"/>
</dbReference>
<dbReference type="PROSITE" id="PS00618">
    <property type="entry name" value="RECF_2"/>
    <property type="match status" value="1"/>
</dbReference>
<name>RECF_SHESR</name>
<organism>
    <name type="scientific">Shewanella sp. (strain MR-7)</name>
    <dbReference type="NCBI Taxonomy" id="60481"/>
    <lineage>
        <taxon>Bacteria</taxon>
        <taxon>Pseudomonadati</taxon>
        <taxon>Pseudomonadota</taxon>
        <taxon>Gammaproteobacteria</taxon>
        <taxon>Alteromonadales</taxon>
        <taxon>Shewanellaceae</taxon>
        <taxon>Shewanella</taxon>
    </lineage>
</organism>
<feature type="chain" id="PRO_1000048578" description="DNA replication and repair protein RecF">
    <location>
        <begin position="1"/>
        <end position="360"/>
    </location>
</feature>
<feature type="binding site" evidence="1">
    <location>
        <begin position="30"/>
        <end position="37"/>
    </location>
    <ligand>
        <name>ATP</name>
        <dbReference type="ChEBI" id="CHEBI:30616"/>
    </ligand>
</feature>
<comment type="function">
    <text evidence="1">The RecF protein is involved in DNA metabolism; it is required for DNA replication and normal SOS inducibility. RecF binds preferentially to single-stranded, linear DNA. It also seems to bind ATP.</text>
</comment>
<comment type="subcellular location">
    <subcellularLocation>
        <location evidence="1">Cytoplasm</location>
    </subcellularLocation>
</comment>
<comment type="similarity">
    <text evidence="1">Belongs to the RecF family.</text>
</comment>
<accession>Q0I0U6</accession>
<proteinExistence type="inferred from homology"/>
<evidence type="ECO:0000255" key="1">
    <source>
        <dbReference type="HAMAP-Rule" id="MF_00365"/>
    </source>
</evidence>
<reference key="1">
    <citation type="submission" date="2006-08" db="EMBL/GenBank/DDBJ databases">
        <title>Complete sequence of chromosome 1 of Shewanella sp. MR-7.</title>
        <authorList>
            <person name="Copeland A."/>
            <person name="Lucas S."/>
            <person name="Lapidus A."/>
            <person name="Barry K."/>
            <person name="Detter J.C."/>
            <person name="Glavina del Rio T."/>
            <person name="Hammon N."/>
            <person name="Israni S."/>
            <person name="Dalin E."/>
            <person name="Tice H."/>
            <person name="Pitluck S."/>
            <person name="Kiss H."/>
            <person name="Brettin T."/>
            <person name="Bruce D."/>
            <person name="Han C."/>
            <person name="Tapia R."/>
            <person name="Gilna P."/>
            <person name="Schmutz J."/>
            <person name="Larimer F."/>
            <person name="Land M."/>
            <person name="Hauser L."/>
            <person name="Kyrpides N."/>
            <person name="Mikhailova N."/>
            <person name="Nealson K."/>
            <person name="Konstantinidis K."/>
            <person name="Klappenbach J."/>
            <person name="Tiedje J."/>
            <person name="Richardson P."/>
        </authorList>
    </citation>
    <scope>NUCLEOTIDE SEQUENCE [LARGE SCALE GENOMIC DNA]</scope>
    <source>
        <strain>MR-7</strain>
    </source>
</reference>
<protein>
    <recommendedName>
        <fullName evidence="1">DNA replication and repair protein RecF</fullName>
    </recommendedName>
</protein>